<protein>
    <recommendedName>
        <fullName evidence="1">Ribosome-recycling factor</fullName>
        <shortName evidence="1">RRF</shortName>
    </recommendedName>
    <alternativeName>
        <fullName evidence="1">Ribosome-releasing factor</fullName>
    </alternativeName>
</protein>
<proteinExistence type="inferred from homology"/>
<keyword id="KW-0963">Cytoplasm</keyword>
<keyword id="KW-0648">Protein biosynthesis</keyword>
<evidence type="ECO:0000255" key="1">
    <source>
        <dbReference type="HAMAP-Rule" id="MF_00040"/>
    </source>
</evidence>
<feature type="chain" id="PRO_1000090731" description="Ribosome-recycling factor">
    <location>
        <begin position="1"/>
        <end position="185"/>
    </location>
</feature>
<comment type="function">
    <text evidence="1">Responsible for the release of ribosomes from messenger RNA at the termination of protein biosynthesis. May increase the efficiency of translation by recycling ribosomes from one round of translation to another.</text>
</comment>
<comment type="subcellular location">
    <subcellularLocation>
        <location evidence="1">Cytoplasm</location>
    </subcellularLocation>
</comment>
<comment type="similarity">
    <text evidence="1">Belongs to the RRF family.</text>
</comment>
<name>RRF_COXB1</name>
<sequence>MINDIINDSKSRMEKSLGSLKTELAKLRTGRAHPSLLEHIKVDYYNVETPLSQVASIAIENPRTLSITPWEKNMVGPIEKAIQKADLGLNPATVGMVIRVPLPPLTEERRKELARVVREEAEHARVAIRNIRREANNDLKELMKEKEISEDEERRAQTAIQKLTDAQIAEVDKMASQKEADLMAV</sequence>
<reference key="1">
    <citation type="journal article" date="2009" name="Infect. Immun.">
        <title>Comparative genomics reveal extensive transposon-mediated genomic plasticity and diversity among potential effector proteins within the genus Coxiella.</title>
        <authorList>
            <person name="Beare P.A."/>
            <person name="Unsworth N."/>
            <person name="Andoh M."/>
            <person name="Voth D.E."/>
            <person name="Omsland A."/>
            <person name="Gilk S.D."/>
            <person name="Williams K.P."/>
            <person name="Sobral B.W."/>
            <person name="Kupko J.J. III"/>
            <person name="Porcella S.F."/>
            <person name="Samuel J.E."/>
            <person name="Heinzen R.A."/>
        </authorList>
    </citation>
    <scope>NUCLEOTIDE SEQUENCE [LARGE SCALE GENOMIC DNA]</scope>
    <source>
        <strain>CbuK_Q154</strain>
    </source>
</reference>
<accession>B6J8M4</accession>
<organism>
    <name type="scientific">Coxiella burnetii (strain CbuK_Q154)</name>
    <name type="common">Coxiella burnetii (strain Q154)</name>
    <dbReference type="NCBI Taxonomy" id="434924"/>
    <lineage>
        <taxon>Bacteria</taxon>
        <taxon>Pseudomonadati</taxon>
        <taxon>Pseudomonadota</taxon>
        <taxon>Gammaproteobacteria</taxon>
        <taxon>Legionellales</taxon>
        <taxon>Coxiellaceae</taxon>
        <taxon>Coxiella</taxon>
    </lineage>
</organism>
<dbReference type="EMBL" id="CP001020">
    <property type="protein sequence ID" value="ACJ20623.1"/>
    <property type="molecule type" value="Genomic_DNA"/>
</dbReference>
<dbReference type="RefSeq" id="WP_005771681.1">
    <property type="nucleotide sequence ID" value="NC_011528.1"/>
</dbReference>
<dbReference type="SMR" id="B6J8M4"/>
<dbReference type="KEGG" id="cbc:CbuK_1454"/>
<dbReference type="HOGENOM" id="CLU_073981_2_0_6"/>
<dbReference type="GO" id="GO:0005829">
    <property type="term" value="C:cytosol"/>
    <property type="evidence" value="ECO:0007669"/>
    <property type="project" value="GOC"/>
</dbReference>
<dbReference type="GO" id="GO:0043023">
    <property type="term" value="F:ribosomal large subunit binding"/>
    <property type="evidence" value="ECO:0007669"/>
    <property type="project" value="TreeGrafter"/>
</dbReference>
<dbReference type="GO" id="GO:0002184">
    <property type="term" value="P:cytoplasmic translational termination"/>
    <property type="evidence" value="ECO:0007669"/>
    <property type="project" value="TreeGrafter"/>
</dbReference>
<dbReference type="CDD" id="cd00520">
    <property type="entry name" value="RRF"/>
    <property type="match status" value="1"/>
</dbReference>
<dbReference type="FunFam" id="1.10.132.20:FF:000001">
    <property type="entry name" value="Ribosome-recycling factor"/>
    <property type="match status" value="1"/>
</dbReference>
<dbReference type="FunFam" id="3.30.1360.40:FF:000001">
    <property type="entry name" value="Ribosome-recycling factor"/>
    <property type="match status" value="1"/>
</dbReference>
<dbReference type="Gene3D" id="3.30.1360.40">
    <property type="match status" value="1"/>
</dbReference>
<dbReference type="Gene3D" id="1.10.132.20">
    <property type="entry name" value="Ribosome-recycling factor"/>
    <property type="match status" value="1"/>
</dbReference>
<dbReference type="HAMAP" id="MF_00040">
    <property type="entry name" value="RRF"/>
    <property type="match status" value="1"/>
</dbReference>
<dbReference type="InterPro" id="IPR002661">
    <property type="entry name" value="Ribosome_recyc_fac"/>
</dbReference>
<dbReference type="InterPro" id="IPR023584">
    <property type="entry name" value="Ribosome_recyc_fac_dom"/>
</dbReference>
<dbReference type="InterPro" id="IPR036191">
    <property type="entry name" value="RRF_sf"/>
</dbReference>
<dbReference type="NCBIfam" id="TIGR00496">
    <property type="entry name" value="frr"/>
    <property type="match status" value="1"/>
</dbReference>
<dbReference type="PANTHER" id="PTHR20982:SF3">
    <property type="entry name" value="MITOCHONDRIAL RIBOSOME RECYCLING FACTOR PSEUDO 1"/>
    <property type="match status" value="1"/>
</dbReference>
<dbReference type="PANTHER" id="PTHR20982">
    <property type="entry name" value="RIBOSOME RECYCLING FACTOR"/>
    <property type="match status" value="1"/>
</dbReference>
<dbReference type="Pfam" id="PF01765">
    <property type="entry name" value="RRF"/>
    <property type="match status" value="1"/>
</dbReference>
<dbReference type="SUPFAM" id="SSF55194">
    <property type="entry name" value="Ribosome recycling factor, RRF"/>
    <property type="match status" value="1"/>
</dbReference>
<gene>
    <name evidence="1" type="primary">frr</name>
    <name type="ordered locus">CbuK_1454</name>
</gene>